<sequence length="117" mass="12837">MKSKRGFTLLEVLVALAIFATAAISVIRSVSQHINTVNYLEEKMFAAMVVDNQMAQVMLNPQSLAAREGSEQMAGRTWYWKLSPVKTADNLLKAFDVSVATEKGATPVVTVRSYVAN</sequence>
<dbReference type="EMBL" id="L33796">
    <property type="protein sequence ID" value="AAA58790.1"/>
    <property type="molecule type" value="Genomic_DNA"/>
</dbReference>
<dbReference type="EMBL" id="AE003852">
    <property type="protein sequence ID" value="AAF95868.1"/>
    <property type="molecule type" value="Genomic_DNA"/>
</dbReference>
<dbReference type="PIR" id="B82041">
    <property type="entry name" value="B82041"/>
</dbReference>
<dbReference type="RefSeq" id="NP_232355.1">
    <property type="nucleotide sequence ID" value="NC_002505.1"/>
</dbReference>
<dbReference type="SMR" id="P45775"/>
<dbReference type="STRING" id="243277.VC_2728"/>
<dbReference type="DNASU" id="2614891"/>
<dbReference type="EnsemblBacteria" id="AAF95868">
    <property type="protein sequence ID" value="AAF95868"/>
    <property type="gene ID" value="VC_2728"/>
</dbReference>
<dbReference type="KEGG" id="vch:VC_2728"/>
<dbReference type="PATRIC" id="fig|243277.26.peg.2603"/>
<dbReference type="eggNOG" id="COG2165">
    <property type="taxonomic scope" value="Bacteria"/>
</dbReference>
<dbReference type="HOGENOM" id="CLU_121289_3_1_6"/>
<dbReference type="Proteomes" id="UP000000584">
    <property type="component" value="Chromosome 1"/>
</dbReference>
<dbReference type="GO" id="GO:0005886">
    <property type="term" value="C:plasma membrane"/>
    <property type="evidence" value="ECO:0007669"/>
    <property type="project" value="UniProtKB-SubCell"/>
</dbReference>
<dbReference type="GO" id="GO:0015627">
    <property type="term" value="C:type II protein secretion system complex"/>
    <property type="evidence" value="ECO:0000318"/>
    <property type="project" value="GO_Central"/>
</dbReference>
<dbReference type="GO" id="GO:0015628">
    <property type="term" value="P:protein secretion by the type II secretion system"/>
    <property type="evidence" value="ECO:0000318"/>
    <property type="project" value="GO_Central"/>
</dbReference>
<dbReference type="Gene3D" id="3.30.1300.30">
    <property type="entry name" value="GSPII I/J protein-like"/>
    <property type="match status" value="1"/>
</dbReference>
<dbReference type="InterPro" id="IPR012902">
    <property type="entry name" value="N_methyl_site"/>
</dbReference>
<dbReference type="InterPro" id="IPR045584">
    <property type="entry name" value="Pilin-like"/>
</dbReference>
<dbReference type="InterPro" id="IPR003413">
    <property type="entry name" value="T2SS_GspI_C"/>
</dbReference>
<dbReference type="InterPro" id="IPR010052">
    <property type="entry name" value="T2SS_protein-GspI"/>
</dbReference>
<dbReference type="NCBIfam" id="TIGR01707">
    <property type="entry name" value="gspI"/>
    <property type="match status" value="1"/>
</dbReference>
<dbReference type="NCBIfam" id="TIGR02532">
    <property type="entry name" value="IV_pilin_GFxxxE"/>
    <property type="match status" value="1"/>
</dbReference>
<dbReference type="PANTHER" id="PTHR38779">
    <property type="entry name" value="TYPE II SECRETION SYSTEM PROTEIN I-RELATED"/>
    <property type="match status" value="1"/>
</dbReference>
<dbReference type="PANTHER" id="PTHR38779:SF2">
    <property type="entry name" value="TYPE II SECRETION SYSTEM PROTEIN I-RELATED"/>
    <property type="match status" value="1"/>
</dbReference>
<dbReference type="Pfam" id="PF07963">
    <property type="entry name" value="N_methyl"/>
    <property type="match status" value="1"/>
</dbReference>
<dbReference type="Pfam" id="PF02501">
    <property type="entry name" value="T2SSI"/>
    <property type="match status" value="1"/>
</dbReference>
<dbReference type="SUPFAM" id="SSF54523">
    <property type="entry name" value="Pili subunits"/>
    <property type="match status" value="1"/>
</dbReference>
<dbReference type="PROSITE" id="PS00409">
    <property type="entry name" value="PROKAR_NTER_METHYL"/>
    <property type="match status" value="1"/>
</dbReference>
<reference key="1">
    <citation type="thesis" date="1994" institute="Michigan State University" country="United States">
        <title>Organization of the general secretion pathway genes in Vibrio cholerae.</title>
        <authorList>
            <person name="Overbye L.J."/>
        </authorList>
    </citation>
    <scope>NUCLEOTIDE SEQUENCE [GENOMIC DNA]</scope>
    <source>
        <strain>El Tor TRH7000</strain>
    </source>
</reference>
<reference key="2">
    <citation type="journal article" date="2000" name="Nature">
        <title>DNA sequence of both chromosomes of the cholera pathogen Vibrio cholerae.</title>
        <authorList>
            <person name="Heidelberg J.F."/>
            <person name="Eisen J.A."/>
            <person name="Nelson W.C."/>
            <person name="Clayton R.A."/>
            <person name="Gwinn M.L."/>
            <person name="Dodson R.J."/>
            <person name="Haft D.H."/>
            <person name="Hickey E.K."/>
            <person name="Peterson J.D."/>
            <person name="Umayam L.A."/>
            <person name="Gill S.R."/>
            <person name="Nelson K.E."/>
            <person name="Read T.D."/>
            <person name="Tettelin H."/>
            <person name="Richardson D.L."/>
            <person name="Ermolaeva M.D."/>
            <person name="Vamathevan J.J."/>
            <person name="Bass S."/>
            <person name="Qin H."/>
            <person name="Dragoi I."/>
            <person name="Sellers P."/>
            <person name="McDonald L.A."/>
            <person name="Utterback T.R."/>
            <person name="Fleischmann R.D."/>
            <person name="Nierman W.C."/>
            <person name="White O."/>
            <person name="Salzberg S.L."/>
            <person name="Smith H.O."/>
            <person name="Colwell R.R."/>
            <person name="Mekalanos J.J."/>
            <person name="Venter J.C."/>
            <person name="Fraser C.M."/>
        </authorList>
    </citation>
    <scope>NUCLEOTIDE SEQUENCE [LARGE SCALE GENOMIC DNA]</scope>
    <source>
        <strain>ATCC 39315 / El Tor Inaba N16961</strain>
    </source>
</reference>
<feature type="propeptide" id="PRO_0000024242" description="Leader sequence" evidence="3">
    <location>
        <begin position="1"/>
        <end position="6"/>
    </location>
</feature>
<feature type="chain" id="PRO_0000024243" description="Type II secretion system protein I">
    <location>
        <begin position="7"/>
        <end position="117"/>
    </location>
</feature>
<feature type="transmembrane region" description="Helical" evidence="2">
    <location>
        <begin position="7"/>
        <end position="27"/>
    </location>
</feature>
<feature type="modified residue" description="N-methylphenylalanine" evidence="3">
    <location>
        <position position="7"/>
    </location>
</feature>
<gene>
    <name type="primary">epsI</name>
    <name type="ordered locus">VC_2728</name>
</gene>
<evidence type="ECO:0000250" key="1">
    <source>
        <dbReference type="UniProtKB" id="Q00516"/>
    </source>
</evidence>
<evidence type="ECO:0000255" key="2"/>
<evidence type="ECO:0000255" key="3">
    <source>
        <dbReference type="PROSITE-ProRule" id="PRU01070"/>
    </source>
</evidence>
<evidence type="ECO:0000305" key="4"/>
<keyword id="KW-0997">Cell inner membrane</keyword>
<keyword id="KW-1003">Cell membrane</keyword>
<keyword id="KW-0472">Membrane</keyword>
<keyword id="KW-0488">Methylation</keyword>
<keyword id="KW-0653">Protein transport</keyword>
<keyword id="KW-1185">Reference proteome</keyword>
<keyword id="KW-0812">Transmembrane</keyword>
<keyword id="KW-1133">Transmembrane helix</keyword>
<keyword id="KW-0813">Transport</keyword>
<organism>
    <name type="scientific">Vibrio cholerae serotype O1 (strain ATCC 39315 / El Tor Inaba N16961)</name>
    <dbReference type="NCBI Taxonomy" id="243277"/>
    <lineage>
        <taxon>Bacteria</taxon>
        <taxon>Pseudomonadati</taxon>
        <taxon>Pseudomonadota</taxon>
        <taxon>Gammaproteobacteria</taxon>
        <taxon>Vibrionales</taxon>
        <taxon>Vibrionaceae</taxon>
        <taxon>Vibrio</taxon>
    </lineage>
</organism>
<proteinExistence type="inferred from homology"/>
<name>GSPI_VIBCH</name>
<accession>P45775</accession>
<accession>Q9JPZ8</accession>
<protein>
    <recommendedName>
        <fullName>Type II secretion system protein I</fullName>
        <shortName>T2SS minor pseudopilin I</shortName>
    </recommendedName>
    <alternativeName>
        <fullName>Cholera toxin secretion protein EpsI</fullName>
    </alternativeName>
    <alternativeName>
        <fullName>General secretion pathway protein I</fullName>
    </alternativeName>
</protein>
<comment type="function">
    <text evidence="1">Component of the type II secretion system required for the energy-dependent secretion of extracellular factors such as proteases and toxins from the periplasm. Part of the pseudopilus tip complex that is critical for the recognition and binding of secretion substrates.</text>
</comment>
<comment type="subunit">
    <text evidence="1">Type II secretion is composed of four main components: the outer membrane complex, the inner membrane complex, the cytoplasmic secretion ATPase and the periplasm-spanning pseudopilus. Interacts with core component EpsG.</text>
</comment>
<comment type="subcellular location">
    <subcellularLocation>
        <location evidence="1">Cell inner membrane</location>
        <topology evidence="2">Single-pass membrane protein</topology>
    </subcellularLocation>
</comment>
<comment type="PTM">
    <text evidence="1">Cleaved by prepilin peptidase.</text>
</comment>
<comment type="PTM">
    <text evidence="1">Methylated by prepilin peptidase at the amino group of the N-terminal phenylalanine once the leader sequence is cleaved by prepilin peptidase.</text>
</comment>
<comment type="similarity">
    <text evidence="4">Belongs to the GSP I family.</text>
</comment>